<accession>A1SBR9</accession>
<evidence type="ECO:0000255" key="1">
    <source>
        <dbReference type="HAMAP-Rule" id="MF_01632"/>
    </source>
</evidence>
<reference key="1">
    <citation type="submission" date="2006-12" db="EMBL/GenBank/DDBJ databases">
        <title>Complete sequence of Shewanella amazonensis SB2B.</title>
        <authorList>
            <consortium name="US DOE Joint Genome Institute"/>
            <person name="Copeland A."/>
            <person name="Lucas S."/>
            <person name="Lapidus A."/>
            <person name="Barry K."/>
            <person name="Detter J.C."/>
            <person name="Glavina del Rio T."/>
            <person name="Hammon N."/>
            <person name="Israni S."/>
            <person name="Dalin E."/>
            <person name="Tice H."/>
            <person name="Pitluck S."/>
            <person name="Munk A.C."/>
            <person name="Brettin T."/>
            <person name="Bruce D."/>
            <person name="Han C."/>
            <person name="Tapia R."/>
            <person name="Gilna P."/>
            <person name="Schmutz J."/>
            <person name="Larimer F."/>
            <person name="Land M."/>
            <person name="Hauser L."/>
            <person name="Kyrpides N."/>
            <person name="Mikhailova N."/>
            <person name="Fredrickson J."/>
            <person name="Richardson P."/>
        </authorList>
    </citation>
    <scope>NUCLEOTIDE SEQUENCE [LARGE SCALE GENOMIC DNA]</scope>
    <source>
        <strain>ATCC BAA-1098 / SB2B</strain>
    </source>
</reference>
<keyword id="KW-0963">Cytoplasm</keyword>
<keyword id="KW-0456">Lyase</keyword>
<keyword id="KW-0670">Pyruvate</keyword>
<keyword id="KW-1185">Reference proteome</keyword>
<keyword id="KW-0831">Ubiquinone biosynthesis</keyword>
<sequence>MSVTSLSFPYGESICWYSPDELDRLPDGALADWLLASGSLTARLRAHCSQFEVRVLGEAMLPGLPGEPQLPHTWVREVLLILDGTPWVFARTLVPEALLTRCGDELTALGDRPLGELLFSSNLFTPGRIEIAGFHSCGTLARLAESLGQNVHGRLWGRRRYFEREGDELIVSEIFLPAAMDYILGPQ</sequence>
<organism>
    <name type="scientific">Shewanella amazonensis (strain ATCC BAA-1098 / SB2B)</name>
    <dbReference type="NCBI Taxonomy" id="326297"/>
    <lineage>
        <taxon>Bacteria</taxon>
        <taxon>Pseudomonadati</taxon>
        <taxon>Pseudomonadota</taxon>
        <taxon>Gammaproteobacteria</taxon>
        <taxon>Alteromonadales</taxon>
        <taxon>Shewanellaceae</taxon>
        <taxon>Shewanella</taxon>
    </lineage>
</organism>
<feature type="chain" id="PRO_0000292076" description="Probable chorismate pyruvate-lyase">
    <location>
        <begin position="1"/>
        <end position="187"/>
    </location>
</feature>
<feature type="binding site" evidence="1">
    <location>
        <position position="76"/>
    </location>
    <ligand>
        <name>substrate</name>
    </ligand>
</feature>
<feature type="binding site" evidence="1">
    <location>
        <position position="114"/>
    </location>
    <ligand>
        <name>substrate</name>
    </ligand>
</feature>
<feature type="binding site" evidence="1">
    <location>
        <position position="173"/>
    </location>
    <ligand>
        <name>substrate</name>
    </ligand>
</feature>
<gene>
    <name evidence="1" type="primary">ubiC</name>
    <name type="ordered locus">Sama_3623</name>
</gene>
<comment type="function">
    <text evidence="1">Removes the pyruvyl group from chorismate, with concomitant aromatization of the ring, to provide 4-hydroxybenzoate (4HB) for the ubiquinone pathway.</text>
</comment>
<comment type="catalytic activity">
    <reaction evidence="1">
        <text>chorismate = 4-hydroxybenzoate + pyruvate</text>
        <dbReference type="Rhea" id="RHEA:16505"/>
        <dbReference type="ChEBI" id="CHEBI:15361"/>
        <dbReference type="ChEBI" id="CHEBI:17879"/>
        <dbReference type="ChEBI" id="CHEBI:29748"/>
        <dbReference type="EC" id="4.1.3.40"/>
    </reaction>
</comment>
<comment type="pathway">
    <text evidence="1">Cofactor biosynthesis; ubiquinone biosynthesis.</text>
</comment>
<comment type="subcellular location">
    <subcellularLocation>
        <location evidence="1">Cytoplasm</location>
    </subcellularLocation>
</comment>
<comment type="similarity">
    <text evidence="1">Belongs to the UbiC family.</text>
</comment>
<proteinExistence type="inferred from homology"/>
<name>UBIC_SHEAM</name>
<protein>
    <recommendedName>
        <fullName evidence="1">Probable chorismate pyruvate-lyase</fullName>
        <shortName evidence="1">CL</shortName>
        <shortName evidence="1">CPL</shortName>
        <ecNumber evidence="1">4.1.3.40</ecNumber>
    </recommendedName>
</protein>
<dbReference type="EC" id="4.1.3.40" evidence="1"/>
<dbReference type="EMBL" id="CP000507">
    <property type="protein sequence ID" value="ABM01826.1"/>
    <property type="molecule type" value="Genomic_DNA"/>
</dbReference>
<dbReference type="RefSeq" id="WP_011761729.1">
    <property type="nucleotide sequence ID" value="NC_008700.1"/>
</dbReference>
<dbReference type="SMR" id="A1SBR9"/>
<dbReference type="STRING" id="326297.Sama_3623"/>
<dbReference type="KEGG" id="saz:Sama_3623"/>
<dbReference type="eggNOG" id="COG3161">
    <property type="taxonomic scope" value="Bacteria"/>
</dbReference>
<dbReference type="HOGENOM" id="CLU_096824_1_1_6"/>
<dbReference type="OrthoDB" id="9789493at2"/>
<dbReference type="UniPathway" id="UPA00232"/>
<dbReference type="Proteomes" id="UP000009175">
    <property type="component" value="Chromosome"/>
</dbReference>
<dbReference type="GO" id="GO:0005829">
    <property type="term" value="C:cytosol"/>
    <property type="evidence" value="ECO:0007669"/>
    <property type="project" value="TreeGrafter"/>
</dbReference>
<dbReference type="GO" id="GO:0008813">
    <property type="term" value="F:chorismate lyase activity"/>
    <property type="evidence" value="ECO:0007669"/>
    <property type="project" value="UniProtKB-UniRule"/>
</dbReference>
<dbReference type="GO" id="GO:0042866">
    <property type="term" value="P:pyruvate biosynthetic process"/>
    <property type="evidence" value="ECO:0007669"/>
    <property type="project" value="UniProtKB-UniRule"/>
</dbReference>
<dbReference type="GO" id="GO:0006744">
    <property type="term" value="P:ubiquinone biosynthetic process"/>
    <property type="evidence" value="ECO:0007669"/>
    <property type="project" value="UniProtKB-UniRule"/>
</dbReference>
<dbReference type="Gene3D" id="3.40.1410.10">
    <property type="entry name" value="Chorismate lyase-like"/>
    <property type="match status" value="1"/>
</dbReference>
<dbReference type="HAMAP" id="MF_01632">
    <property type="entry name" value="UbiC"/>
    <property type="match status" value="1"/>
</dbReference>
<dbReference type="InterPro" id="IPR007440">
    <property type="entry name" value="Chorismate--pyruvate_lyase"/>
</dbReference>
<dbReference type="InterPro" id="IPR028978">
    <property type="entry name" value="Chorismate_lyase_/UTRA_dom_sf"/>
</dbReference>
<dbReference type="PANTHER" id="PTHR38683">
    <property type="entry name" value="CHORISMATE PYRUVATE-LYASE"/>
    <property type="match status" value="1"/>
</dbReference>
<dbReference type="PANTHER" id="PTHR38683:SF1">
    <property type="entry name" value="CHORISMATE PYRUVATE-LYASE"/>
    <property type="match status" value="1"/>
</dbReference>
<dbReference type="Pfam" id="PF04345">
    <property type="entry name" value="Chor_lyase"/>
    <property type="match status" value="1"/>
</dbReference>
<dbReference type="SUPFAM" id="SSF64288">
    <property type="entry name" value="Chorismate lyase-like"/>
    <property type="match status" value="1"/>
</dbReference>